<evidence type="ECO:0000256" key="1">
    <source>
        <dbReference type="SAM" id="MobiDB-lite"/>
    </source>
</evidence>
<name>VG32_BPML5</name>
<dbReference type="EMBL" id="Z18946">
    <property type="protein sequence ID" value="CAA79408.1"/>
    <property type="molecule type" value="Genomic_DNA"/>
</dbReference>
<dbReference type="PIR" id="S30977">
    <property type="entry name" value="S30977"/>
</dbReference>
<dbReference type="RefSeq" id="NP_039696.1">
    <property type="nucleotide sequence ID" value="NC_001335.1"/>
</dbReference>
<dbReference type="SMR" id="Q05241"/>
<dbReference type="GeneID" id="2942918"/>
<dbReference type="KEGG" id="vg:2942918"/>
<dbReference type="OrthoDB" id="17155at10239"/>
<dbReference type="Proteomes" id="UP000002123">
    <property type="component" value="Genome"/>
</dbReference>
<organismHost>
    <name type="scientific">Mycobacterium</name>
    <dbReference type="NCBI Taxonomy" id="1763"/>
</organismHost>
<feature type="chain" id="PRO_0000164753" description="Gene 32 protein">
    <location>
        <begin position="1"/>
        <end position="220"/>
    </location>
</feature>
<feature type="region of interest" description="Disordered" evidence="1">
    <location>
        <begin position="184"/>
        <end position="205"/>
    </location>
</feature>
<feature type="compositionally biased region" description="Gly residues" evidence="1">
    <location>
        <begin position="187"/>
        <end position="199"/>
    </location>
</feature>
<sequence length="220" mass="21335">MTGISLGVNDIRNLSIFLGVSNKILKVSLGTEKVWPAFTPVLTTFATVGTYTYNIPDGAKFIDVILLGGGGGGKGMALADGWGRGGDAGSWAIVTLERGVHIPLSTKTITGLVGAGGAAGAGSVFSGKAGGPGGNTTASAVGWSGLTATGGPGGSVIDILSVAGKSPGDRTYNDQLYIGGAQQNSAGGNGNAPGGGGAGAQVSAQSGGAGARGQAWFFAY</sequence>
<accession>Q05241</accession>
<proteinExistence type="predicted"/>
<keyword id="KW-1185">Reference proteome</keyword>
<gene>
    <name type="primary">32</name>
</gene>
<protein>
    <recommendedName>
        <fullName>Gene 32 protein</fullName>
    </recommendedName>
    <alternativeName>
        <fullName>Gp32</fullName>
    </alternativeName>
</protein>
<reference key="1">
    <citation type="journal article" date="1993" name="Mol. Microbiol.">
        <title>DNA sequence, structure and gene expression of mycobacteriophage L5: a phage system for mycobacterial genetics.</title>
        <authorList>
            <person name="Hatfull G.F."/>
            <person name="Sarkis G.J."/>
        </authorList>
    </citation>
    <scope>NUCLEOTIDE SEQUENCE [LARGE SCALE GENOMIC DNA]</scope>
</reference>
<organism>
    <name type="scientific">Mycobacterium phage L5</name>
    <name type="common">Mycobacteriophage L5</name>
    <dbReference type="NCBI Taxonomy" id="31757"/>
    <lineage>
        <taxon>Viruses</taxon>
        <taxon>Duplodnaviria</taxon>
        <taxon>Heunggongvirae</taxon>
        <taxon>Uroviricota</taxon>
        <taxon>Caudoviricetes</taxon>
        <taxon>Fromanvirus</taxon>
    </lineage>
</organism>